<name>RS16_CLOPS</name>
<evidence type="ECO:0000255" key="1">
    <source>
        <dbReference type="HAMAP-Rule" id="MF_00385"/>
    </source>
</evidence>
<evidence type="ECO:0000305" key="2"/>
<keyword id="KW-0687">Ribonucleoprotein</keyword>
<keyword id="KW-0689">Ribosomal protein</keyword>
<proteinExistence type="inferred from homology"/>
<gene>
    <name evidence="1" type="primary">rpsP</name>
    <name type="ordered locus">CPR_1684</name>
</gene>
<reference key="1">
    <citation type="journal article" date="2006" name="Genome Res.">
        <title>Skewed genomic variability in strains of the toxigenic bacterial pathogen, Clostridium perfringens.</title>
        <authorList>
            <person name="Myers G.S.A."/>
            <person name="Rasko D.A."/>
            <person name="Cheung J.K."/>
            <person name="Ravel J."/>
            <person name="Seshadri R."/>
            <person name="DeBoy R.T."/>
            <person name="Ren Q."/>
            <person name="Varga J."/>
            <person name="Awad M.M."/>
            <person name="Brinkac L.M."/>
            <person name="Daugherty S.C."/>
            <person name="Haft D.H."/>
            <person name="Dodson R.J."/>
            <person name="Madupu R."/>
            <person name="Nelson W.C."/>
            <person name="Rosovitz M.J."/>
            <person name="Sullivan S.A."/>
            <person name="Khouri H."/>
            <person name="Dimitrov G.I."/>
            <person name="Watkins K.L."/>
            <person name="Mulligan S."/>
            <person name="Benton J."/>
            <person name="Radune D."/>
            <person name="Fisher D.J."/>
            <person name="Atkins H.S."/>
            <person name="Hiscox T."/>
            <person name="Jost B.H."/>
            <person name="Billington S.J."/>
            <person name="Songer J.G."/>
            <person name="McClane B.A."/>
            <person name="Titball R.W."/>
            <person name="Rood J.I."/>
            <person name="Melville S.B."/>
            <person name="Paulsen I.T."/>
        </authorList>
    </citation>
    <scope>NUCLEOTIDE SEQUENCE [LARGE SCALE GENOMIC DNA]</scope>
    <source>
        <strain>SM101 / Type A</strain>
    </source>
</reference>
<protein>
    <recommendedName>
        <fullName evidence="1">Small ribosomal subunit protein bS16</fullName>
    </recommendedName>
    <alternativeName>
        <fullName evidence="2">30S ribosomal protein S16</fullName>
    </alternativeName>
</protein>
<organism>
    <name type="scientific">Clostridium perfringens (strain SM101 / Type A)</name>
    <dbReference type="NCBI Taxonomy" id="289380"/>
    <lineage>
        <taxon>Bacteria</taxon>
        <taxon>Bacillati</taxon>
        <taxon>Bacillota</taxon>
        <taxon>Clostridia</taxon>
        <taxon>Eubacteriales</taxon>
        <taxon>Clostridiaceae</taxon>
        <taxon>Clostridium</taxon>
    </lineage>
</organism>
<accession>Q0SSA8</accession>
<sequence>MAVKIRLRRMGAHKAPFYRVVVADSRSPRDGRFIEEIGYYNPIAKPEAEVKIDAEKAAKWLGNGAQPTDIVKKLFNQAGIK</sequence>
<dbReference type="EMBL" id="CP000312">
    <property type="protein sequence ID" value="ABG85864.1"/>
    <property type="molecule type" value="Genomic_DNA"/>
</dbReference>
<dbReference type="RefSeq" id="WP_003458442.1">
    <property type="nucleotide sequence ID" value="NZ_CAXVKH010000001.1"/>
</dbReference>
<dbReference type="SMR" id="Q0SSA8"/>
<dbReference type="GeneID" id="93001750"/>
<dbReference type="KEGG" id="cpr:CPR_1684"/>
<dbReference type="Proteomes" id="UP000001824">
    <property type="component" value="Chromosome"/>
</dbReference>
<dbReference type="GO" id="GO:0005737">
    <property type="term" value="C:cytoplasm"/>
    <property type="evidence" value="ECO:0007669"/>
    <property type="project" value="UniProtKB-ARBA"/>
</dbReference>
<dbReference type="GO" id="GO:0015935">
    <property type="term" value="C:small ribosomal subunit"/>
    <property type="evidence" value="ECO:0007669"/>
    <property type="project" value="TreeGrafter"/>
</dbReference>
<dbReference type="GO" id="GO:0003735">
    <property type="term" value="F:structural constituent of ribosome"/>
    <property type="evidence" value="ECO:0007669"/>
    <property type="project" value="InterPro"/>
</dbReference>
<dbReference type="GO" id="GO:0006412">
    <property type="term" value="P:translation"/>
    <property type="evidence" value="ECO:0007669"/>
    <property type="project" value="UniProtKB-UniRule"/>
</dbReference>
<dbReference type="Gene3D" id="3.30.1320.10">
    <property type="match status" value="1"/>
</dbReference>
<dbReference type="HAMAP" id="MF_00385">
    <property type="entry name" value="Ribosomal_bS16"/>
    <property type="match status" value="1"/>
</dbReference>
<dbReference type="InterPro" id="IPR000307">
    <property type="entry name" value="Ribosomal_bS16"/>
</dbReference>
<dbReference type="InterPro" id="IPR023803">
    <property type="entry name" value="Ribosomal_bS16_dom_sf"/>
</dbReference>
<dbReference type="NCBIfam" id="TIGR00002">
    <property type="entry name" value="S16"/>
    <property type="match status" value="1"/>
</dbReference>
<dbReference type="PANTHER" id="PTHR12919">
    <property type="entry name" value="30S RIBOSOMAL PROTEIN S16"/>
    <property type="match status" value="1"/>
</dbReference>
<dbReference type="PANTHER" id="PTHR12919:SF20">
    <property type="entry name" value="SMALL RIBOSOMAL SUBUNIT PROTEIN BS16M"/>
    <property type="match status" value="1"/>
</dbReference>
<dbReference type="Pfam" id="PF00886">
    <property type="entry name" value="Ribosomal_S16"/>
    <property type="match status" value="1"/>
</dbReference>
<dbReference type="SUPFAM" id="SSF54565">
    <property type="entry name" value="Ribosomal protein S16"/>
    <property type="match status" value="1"/>
</dbReference>
<feature type="chain" id="PRO_1000049246" description="Small ribosomal subunit protein bS16">
    <location>
        <begin position="1"/>
        <end position="81"/>
    </location>
</feature>
<comment type="similarity">
    <text evidence="1">Belongs to the bacterial ribosomal protein bS16 family.</text>
</comment>